<gene>
    <name evidence="1" type="primary">ctaA</name>
    <name type="ordered locus">AMF_103</name>
</gene>
<reference key="1">
    <citation type="journal article" date="2009" name="BMC Genomics">
        <title>Conservation in the face of diversity: multistrain analysis of an intracellular bacterium.</title>
        <authorList>
            <person name="Dark M.J."/>
            <person name="Herndon D.R."/>
            <person name="Kappmeyer L.S."/>
            <person name="Gonzales M.P."/>
            <person name="Nordeen E."/>
            <person name="Palmer G.H."/>
            <person name="Knowles D.P. Jr."/>
            <person name="Brayton K.A."/>
        </authorList>
    </citation>
    <scope>NUCLEOTIDE SEQUENCE [LARGE SCALE GENOMIC DNA]</scope>
    <source>
        <strain>Florida</strain>
    </source>
</reference>
<evidence type="ECO:0000255" key="1">
    <source>
        <dbReference type="HAMAP-Rule" id="MF_01665"/>
    </source>
</evidence>
<comment type="function">
    <text evidence="1">Catalyzes the conversion of heme O to heme A by two successive hydroxylations of the methyl group at C8. The first hydroxylation forms heme I, the second hydroxylation results in an unstable dihydroxymethyl group, which spontaneously dehydrates, resulting in the formyl group of heme A.</text>
</comment>
<comment type="catalytic activity">
    <reaction evidence="1">
        <text>Fe(II)-heme o + 2 A + H2O = Fe(II)-heme a + 2 AH2</text>
        <dbReference type="Rhea" id="RHEA:63388"/>
        <dbReference type="ChEBI" id="CHEBI:13193"/>
        <dbReference type="ChEBI" id="CHEBI:15377"/>
        <dbReference type="ChEBI" id="CHEBI:17499"/>
        <dbReference type="ChEBI" id="CHEBI:60530"/>
        <dbReference type="ChEBI" id="CHEBI:61715"/>
        <dbReference type="EC" id="1.17.99.9"/>
    </reaction>
    <physiologicalReaction direction="left-to-right" evidence="1">
        <dbReference type="Rhea" id="RHEA:63389"/>
    </physiologicalReaction>
</comment>
<comment type="cofactor">
    <cofactor evidence="1">
        <name>heme b</name>
        <dbReference type="ChEBI" id="CHEBI:60344"/>
    </cofactor>
</comment>
<comment type="pathway">
    <text evidence="1">Porphyrin-containing compound metabolism; heme A biosynthesis; heme A from heme O: step 1/1.</text>
</comment>
<comment type="subunit">
    <text evidence="1">Interacts with CtaB.</text>
</comment>
<comment type="subcellular location">
    <subcellularLocation>
        <location evidence="1">Cell membrane</location>
        <topology evidence="1">Multi-pass membrane protein</topology>
    </subcellularLocation>
</comment>
<comment type="similarity">
    <text evidence="1">Belongs to the COX15/CtaA family. Type 2 subfamily.</text>
</comment>
<proteinExistence type="inferred from homology"/>
<name>CTAA_ANAMF</name>
<accession>B9KHM9</accession>
<keyword id="KW-1003">Cell membrane</keyword>
<keyword id="KW-0350">Heme biosynthesis</keyword>
<keyword id="KW-0408">Iron</keyword>
<keyword id="KW-0472">Membrane</keyword>
<keyword id="KW-0479">Metal-binding</keyword>
<keyword id="KW-0560">Oxidoreductase</keyword>
<keyword id="KW-1185">Reference proteome</keyword>
<keyword id="KW-0812">Transmembrane</keyword>
<keyword id="KW-1133">Transmembrane helix</keyword>
<protein>
    <recommendedName>
        <fullName evidence="1">Heme A synthase</fullName>
        <shortName evidence="1">HAS</shortName>
        <ecNumber evidence="1">1.17.99.9</ecNumber>
    </recommendedName>
    <alternativeName>
        <fullName evidence="1">Cytochrome aa3-controlling protein</fullName>
    </alternativeName>
</protein>
<organism>
    <name type="scientific">Anaplasma marginale (strain Florida)</name>
    <dbReference type="NCBI Taxonomy" id="320483"/>
    <lineage>
        <taxon>Bacteria</taxon>
        <taxon>Pseudomonadati</taxon>
        <taxon>Pseudomonadota</taxon>
        <taxon>Alphaproteobacteria</taxon>
        <taxon>Rickettsiales</taxon>
        <taxon>Anaplasmataceae</taxon>
        <taxon>Anaplasma</taxon>
    </lineage>
</organism>
<sequence length="341" mass="37409">MKAHFGVTVWLGVCCSMTLLMVVIGGITRLTHSGLSITEWQPIVGVVPPIGDEAWLREKEKYAQTPEYRHRAADISLDDFKRIYIIEYIHRLFGRALGAVFCLPIPYFAITKRINRAMVAKLLMVALLGGMQGAMGWFMVKSGLVDTPRVSHYRLAGHLFLTILLFSILWHSFLRCAGVRSTTTTTNARFFTAAAVVGLTVLQMVLGALVAGLDAGLTYNTFPLMDGAIIPQSLFSAKLWHGGFLHDVTAVQFLHRLVAVLIVVCAAPLPFWLKTRGAWLFLACVALQFLLGVATLVSVVHIFLAAMHQVFGFVTLAAGVHMLCRLRREGSTCISGHAGIS</sequence>
<feature type="chain" id="PRO_1000187247" description="Heme A synthase">
    <location>
        <begin position="1"/>
        <end position="341"/>
    </location>
</feature>
<feature type="transmembrane region" description="Helical" evidence="1">
    <location>
        <begin position="7"/>
        <end position="27"/>
    </location>
</feature>
<feature type="transmembrane region" description="Helical" evidence="1">
    <location>
        <begin position="92"/>
        <end position="112"/>
    </location>
</feature>
<feature type="transmembrane region" description="Helical" evidence="1">
    <location>
        <begin position="118"/>
        <end position="138"/>
    </location>
</feature>
<feature type="transmembrane region" description="Helical" evidence="1">
    <location>
        <begin position="159"/>
        <end position="179"/>
    </location>
</feature>
<feature type="transmembrane region" description="Helical" evidence="1">
    <location>
        <begin position="190"/>
        <end position="210"/>
    </location>
</feature>
<feature type="transmembrane region" description="Helical" evidence="1">
    <location>
        <begin position="253"/>
        <end position="273"/>
    </location>
</feature>
<feature type="transmembrane region" description="Helical" evidence="1">
    <location>
        <begin position="280"/>
        <end position="300"/>
    </location>
</feature>
<feature type="transmembrane region" description="Helical" evidence="1">
    <location>
        <begin position="302"/>
        <end position="322"/>
    </location>
</feature>
<feature type="binding site" description="axial binding residue" evidence="1">
    <location>
        <position position="255"/>
    </location>
    <ligand>
        <name>heme</name>
        <dbReference type="ChEBI" id="CHEBI:30413"/>
    </ligand>
    <ligandPart>
        <name>Fe</name>
        <dbReference type="ChEBI" id="CHEBI:18248"/>
    </ligandPart>
</feature>
<feature type="binding site" description="axial binding residue" evidence="1">
    <location>
        <position position="308"/>
    </location>
    <ligand>
        <name>heme</name>
        <dbReference type="ChEBI" id="CHEBI:30413"/>
    </ligand>
    <ligandPart>
        <name>Fe</name>
        <dbReference type="ChEBI" id="CHEBI:18248"/>
    </ligandPart>
</feature>
<dbReference type="EC" id="1.17.99.9" evidence="1"/>
<dbReference type="EMBL" id="CP001079">
    <property type="protein sequence ID" value="ACM48991.1"/>
    <property type="molecule type" value="Genomic_DNA"/>
</dbReference>
<dbReference type="SMR" id="B9KHM9"/>
<dbReference type="STRING" id="320483.AMF_103"/>
<dbReference type="KEGG" id="amf:AMF_103"/>
<dbReference type="PATRIC" id="fig|320483.3.peg.121"/>
<dbReference type="eggNOG" id="COG1612">
    <property type="taxonomic scope" value="Bacteria"/>
</dbReference>
<dbReference type="HOGENOM" id="CLU_017627_0_0_5"/>
<dbReference type="UniPathway" id="UPA00269">
    <property type="reaction ID" value="UER00713"/>
</dbReference>
<dbReference type="Proteomes" id="UP000007307">
    <property type="component" value="Chromosome"/>
</dbReference>
<dbReference type="GO" id="GO:0005886">
    <property type="term" value="C:plasma membrane"/>
    <property type="evidence" value="ECO:0007669"/>
    <property type="project" value="UniProtKB-SubCell"/>
</dbReference>
<dbReference type="GO" id="GO:0046872">
    <property type="term" value="F:metal ion binding"/>
    <property type="evidence" value="ECO:0007669"/>
    <property type="project" value="UniProtKB-KW"/>
</dbReference>
<dbReference type="GO" id="GO:0016653">
    <property type="term" value="F:oxidoreductase activity, acting on NAD(P)H, heme protein as acceptor"/>
    <property type="evidence" value="ECO:0007669"/>
    <property type="project" value="InterPro"/>
</dbReference>
<dbReference type="GO" id="GO:0006784">
    <property type="term" value="P:heme A biosynthetic process"/>
    <property type="evidence" value="ECO:0007669"/>
    <property type="project" value="UniProtKB-UniRule"/>
</dbReference>
<dbReference type="HAMAP" id="MF_01665">
    <property type="entry name" value="HemeA_synth_type2"/>
    <property type="match status" value="1"/>
</dbReference>
<dbReference type="InterPro" id="IPR003780">
    <property type="entry name" value="COX15/CtaA_fam"/>
</dbReference>
<dbReference type="InterPro" id="IPR023754">
    <property type="entry name" value="HemeA_Synthase_type2"/>
</dbReference>
<dbReference type="PANTHER" id="PTHR23289">
    <property type="entry name" value="CYTOCHROME C OXIDASE ASSEMBLY PROTEIN COX15"/>
    <property type="match status" value="1"/>
</dbReference>
<dbReference type="PANTHER" id="PTHR23289:SF2">
    <property type="entry name" value="CYTOCHROME C OXIDASE ASSEMBLY PROTEIN COX15 HOMOLOG"/>
    <property type="match status" value="1"/>
</dbReference>
<dbReference type="Pfam" id="PF02628">
    <property type="entry name" value="COX15-CtaA"/>
    <property type="match status" value="1"/>
</dbReference>